<organism>
    <name type="scientific">Gallus gallus</name>
    <name type="common">Chicken</name>
    <dbReference type="NCBI Taxonomy" id="9031"/>
    <lineage>
        <taxon>Eukaryota</taxon>
        <taxon>Metazoa</taxon>
        <taxon>Chordata</taxon>
        <taxon>Craniata</taxon>
        <taxon>Vertebrata</taxon>
        <taxon>Euteleostomi</taxon>
        <taxon>Archelosauria</taxon>
        <taxon>Archosauria</taxon>
        <taxon>Dinosauria</taxon>
        <taxon>Saurischia</taxon>
        <taxon>Theropoda</taxon>
        <taxon>Coelurosauria</taxon>
        <taxon>Aves</taxon>
        <taxon>Neognathae</taxon>
        <taxon>Galloanserae</taxon>
        <taxon>Galliformes</taxon>
        <taxon>Phasianidae</taxon>
        <taxon>Phasianinae</taxon>
        <taxon>Gallus</taxon>
    </lineage>
</organism>
<evidence type="ECO:0000250" key="1">
    <source>
        <dbReference type="UniProtKB" id="Q8IWU4"/>
    </source>
</evidence>
<evidence type="ECO:0000250" key="2">
    <source>
        <dbReference type="UniProtKB" id="Q8TAD4"/>
    </source>
</evidence>
<evidence type="ECO:0000255" key="3"/>
<evidence type="ECO:0000256" key="4">
    <source>
        <dbReference type="SAM" id="MobiDB-lite"/>
    </source>
</evidence>
<evidence type="ECO:0000269" key="5">
    <source>
    </source>
</evidence>
<evidence type="ECO:0000303" key="6">
    <source>
    </source>
</evidence>
<evidence type="ECO:0000305" key="7"/>
<evidence type="ECO:0000305" key="8">
    <source>
    </source>
</evidence>
<evidence type="ECO:0000312" key="9">
    <source>
        <dbReference type="EMBL" id="CAG31439.1"/>
    </source>
</evidence>
<gene>
    <name evidence="2" type="primary">SLC30A5</name>
    <name evidence="6" type="synonym">ZNT5</name>
    <name evidence="9" type="ORF">RCJMB04_6h4</name>
</gene>
<accession>Q5ZLF4</accession>
<accession>Q5MNV7</accession>
<sequence>MEEKYSSQALAGGGVLGPVDVPSARLTRYIVLLCFAKFLKAVGLFESYDLLKAVHLVQFIFIVKLGSAFFMVLFQKPFSSGKVVTKHQWIKIFKHAVVGCIISLLWFFGLTLCGPLRTLLLFEHSDVVVLSLLSVLFTSSGGGPAKTRGAAFFIIAVICLLLFDNDDLMAKIAEHPEGHHDSALTHVLYTVIAFLGVADHKGGVLLLVLALCCKVGFHMASRKLSVDVGGAKRLQALSHLVSVLLLCPWVIVLSLTTESKVESWSSLIMPFITVIFFVVILDFYVESICSVKMESSKCARYGSFLIFISALLFGNFWTHPITDQLRAMNKPAHHESTEHVLSGGVVVSAVFFILSANILSSPSRKGQKGTLIGYSPEGTPLYNFMGDAIQQSSQSLPRFIKESLKQILEEYDSRQIFYFLCLNLAFTFVELFYGVWTNSLGLISDGFHMLFDCSALVMGLFAALMTRWKATRIFSYGYGRVEILSGFINGLFLMVIAFFVFMESVARLVDPPDIDTNMLTPVSVGGLIVNLVGICAFSHAHSHGASRGGCHSHEHSHSYHGHSHSHGHGHSHNDHGHSHGHSHVSSGGGMNTNMRGVFLHVLADTLGSVGVIVSTTFIQQFGWLIADPLCSLFIATLIFLSVIPLLKDACQVLLLRIPPEQEKDLHAALEKIQKIDGVISYRDPHFWCHSASVVAGTIHVQVVSDVMEQRIVQQVTAILKDAGVNNLTVQVEKEAYFQHMSGLSTGFQDVLAMTQHLESMKYYKDGTYIM</sequence>
<proteinExistence type="evidence at transcript level"/>
<dbReference type="EMBL" id="AY703476">
    <property type="protein sequence ID" value="AAV98201.1"/>
    <property type="molecule type" value="mRNA"/>
</dbReference>
<dbReference type="EMBL" id="AJ719780">
    <property type="protein sequence ID" value="CAG31439.1"/>
    <property type="molecule type" value="mRNA"/>
</dbReference>
<dbReference type="RefSeq" id="NP_001026590.2">
    <property type="nucleotide sequence ID" value="NM_001031419.3"/>
</dbReference>
<dbReference type="SMR" id="Q5ZLF4"/>
<dbReference type="FunCoup" id="Q5ZLF4">
    <property type="interactions" value="1208"/>
</dbReference>
<dbReference type="STRING" id="9031.ENSGALP00000057176"/>
<dbReference type="PaxDb" id="9031-ENSGALP00000023825"/>
<dbReference type="GeneID" id="427173"/>
<dbReference type="KEGG" id="gga:427173"/>
<dbReference type="CTD" id="64924"/>
<dbReference type="VEuPathDB" id="HostDB:geneid_427173"/>
<dbReference type="eggNOG" id="KOG1484">
    <property type="taxonomic scope" value="Eukaryota"/>
</dbReference>
<dbReference type="HOGENOM" id="CLU_013430_11_0_1"/>
<dbReference type="InParanoid" id="Q5ZLF4"/>
<dbReference type="OMA" id="NHLFYHF"/>
<dbReference type="OrthoDB" id="78669at2759"/>
<dbReference type="PhylomeDB" id="Q5ZLF4"/>
<dbReference type="Reactome" id="R-GGA-264876">
    <property type="pathway name" value="Insulin processing"/>
</dbReference>
<dbReference type="Reactome" id="R-GGA-435368">
    <property type="pathway name" value="Zinc efflux and compartmentalization by the SLC30 family"/>
</dbReference>
<dbReference type="PRO" id="PR:Q5ZLF4"/>
<dbReference type="Proteomes" id="UP000000539">
    <property type="component" value="Chromosome Z"/>
</dbReference>
<dbReference type="Bgee" id="ENSGALG00000014787">
    <property type="expression patterns" value="Expressed in colon and 13 other cell types or tissues"/>
</dbReference>
<dbReference type="GO" id="GO:0031410">
    <property type="term" value="C:cytoplasmic vesicle"/>
    <property type="evidence" value="ECO:0000318"/>
    <property type="project" value="GO_Central"/>
</dbReference>
<dbReference type="GO" id="GO:0005789">
    <property type="term" value="C:endoplasmic reticulum membrane"/>
    <property type="evidence" value="ECO:0000250"/>
    <property type="project" value="UniProtKB"/>
</dbReference>
<dbReference type="GO" id="GO:0012507">
    <property type="term" value="C:ER to Golgi transport vesicle membrane"/>
    <property type="evidence" value="ECO:0000250"/>
    <property type="project" value="UniProtKB"/>
</dbReference>
<dbReference type="GO" id="GO:0005794">
    <property type="term" value="C:Golgi apparatus"/>
    <property type="evidence" value="ECO:0000250"/>
    <property type="project" value="UniProtKB"/>
</dbReference>
<dbReference type="GO" id="GO:1990674">
    <property type="term" value="C:Golgi cis cisterna membrane"/>
    <property type="evidence" value="ECO:0000250"/>
    <property type="project" value="UniProtKB"/>
</dbReference>
<dbReference type="GO" id="GO:0000139">
    <property type="term" value="C:Golgi membrane"/>
    <property type="evidence" value="ECO:0000250"/>
    <property type="project" value="UniProtKB"/>
</dbReference>
<dbReference type="GO" id="GO:0030667">
    <property type="term" value="C:secretory granule membrane"/>
    <property type="evidence" value="ECO:0000250"/>
    <property type="project" value="UniProtKB"/>
</dbReference>
<dbReference type="GO" id="GO:0032588">
    <property type="term" value="C:trans-Golgi network membrane"/>
    <property type="evidence" value="ECO:0000250"/>
    <property type="project" value="UniProtKB"/>
</dbReference>
<dbReference type="GO" id="GO:0046872">
    <property type="term" value="F:metal ion binding"/>
    <property type="evidence" value="ECO:0007669"/>
    <property type="project" value="UniProtKB-KW"/>
</dbReference>
<dbReference type="GO" id="GO:0005385">
    <property type="term" value="F:zinc ion transmembrane transporter activity"/>
    <property type="evidence" value="ECO:0000315"/>
    <property type="project" value="UniProtKB"/>
</dbReference>
<dbReference type="GO" id="GO:0140826">
    <property type="term" value="F:zinc:proton antiporter activity"/>
    <property type="evidence" value="ECO:0000250"/>
    <property type="project" value="UniProtKB"/>
</dbReference>
<dbReference type="GO" id="GO:0006506">
    <property type="term" value="P:GPI anchor biosynthetic process"/>
    <property type="evidence" value="ECO:0000250"/>
    <property type="project" value="UniProtKB"/>
</dbReference>
<dbReference type="GO" id="GO:0006882">
    <property type="term" value="P:intracellular zinc ion homeostasis"/>
    <property type="evidence" value="ECO:0000318"/>
    <property type="project" value="GO_Central"/>
</dbReference>
<dbReference type="GO" id="GO:1904257">
    <property type="term" value="P:zinc ion import into Golgi lumen"/>
    <property type="evidence" value="ECO:0000314"/>
    <property type="project" value="UniProtKB"/>
</dbReference>
<dbReference type="GO" id="GO:0062111">
    <property type="term" value="P:zinc ion import into organelle"/>
    <property type="evidence" value="ECO:0000250"/>
    <property type="project" value="UniProtKB"/>
</dbReference>
<dbReference type="Gene3D" id="1.20.1510.10">
    <property type="entry name" value="Cation efflux protein transmembrane domain"/>
    <property type="match status" value="1"/>
</dbReference>
<dbReference type="InterPro" id="IPR002524">
    <property type="entry name" value="Cation_efflux"/>
</dbReference>
<dbReference type="InterPro" id="IPR027469">
    <property type="entry name" value="Cation_efflux_TMD_sf"/>
</dbReference>
<dbReference type="InterPro" id="IPR045316">
    <property type="entry name" value="Msc2-like"/>
</dbReference>
<dbReference type="NCBIfam" id="TIGR01297">
    <property type="entry name" value="CDF"/>
    <property type="match status" value="1"/>
</dbReference>
<dbReference type="PANTHER" id="PTHR45755">
    <property type="match status" value="1"/>
</dbReference>
<dbReference type="PANTHER" id="PTHR45755:SF1">
    <property type="entry name" value="PROTON-COUPLED ZINC ANTIPORTER SLC30A5"/>
    <property type="match status" value="1"/>
</dbReference>
<dbReference type="Pfam" id="PF01545">
    <property type="entry name" value="Cation_efflux"/>
    <property type="match status" value="1"/>
</dbReference>
<dbReference type="SUPFAM" id="SSF161111">
    <property type="entry name" value="Cation efflux protein transmembrane domain-like"/>
    <property type="match status" value="1"/>
</dbReference>
<comment type="function">
    <text evidence="5">Together with SLC30A6 forms a functional proton-coupled zinc ion antiporter mediating zinc entry into the lumen of organelles along the secretory pathway (PubMed:15525635). By contributing to zinc ion homeostasis within the early secretory pathway, regulates the activation and folding of enzymes like alkaline phosphatases and enzymes involved in phosphatidylinositol glycan anchor biosynthesis (PubMed:15525635).</text>
</comment>
<comment type="catalytic activity">
    <reaction evidence="2">
        <text>Zn(2+)(in) + 2 H(+)(out) = Zn(2+)(out) + 2 H(+)(in)</text>
        <dbReference type="Rhea" id="RHEA:72627"/>
        <dbReference type="ChEBI" id="CHEBI:15378"/>
        <dbReference type="ChEBI" id="CHEBI:29105"/>
    </reaction>
</comment>
<comment type="subunit">
    <text evidence="2">Heterodimer with SLC30A6/ZNT6; form a functional zinc ion transmembrane transporter.</text>
</comment>
<comment type="subcellular location">
    <subcellularLocation>
        <location evidence="2">Golgi apparatus</location>
        <location evidence="2">Golgi stack membrane</location>
        <topology evidence="3">Multi-pass membrane protein</topology>
    </subcellularLocation>
    <subcellularLocation>
        <location evidence="2">Cytoplasmic vesicle</location>
        <location evidence="2">COPII-coated vesicle membrane</location>
        <topology evidence="3">Multi-pass membrane protein</topology>
    </subcellularLocation>
    <subcellularLocation>
        <location evidence="2">Cytoplasmic vesicle</location>
        <location evidence="2">Secretory vesicle membrane</location>
        <topology evidence="3">Multi-pass membrane protein</topology>
    </subcellularLocation>
    <subcellularLocation>
        <location evidence="5">Golgi apparatus</location>
        <location evidence="5">trans-Golgi network membrane</location>
        <topology evidence="3">Multi-pass membrane protein</topology>
    </subcellularLocation>
    <text evidence="2">Enriched in early compartments of the secretory pathway including COPII-coated vesicles and the Golgi cis cisterna.</text>
</comment>
<comment type="similarity">
    <text evidence="7">Belongs to the cation diffusion facilitator (CDF) transporter (TC 2.A.4) family. SLC30A subfamily.</text>
</comment>
<feature type="chain" id="PRO_0000314295" description="Proton-coupled zinc antiporter SLC30A5">
    <location>
        <begin position="1"/>
        <end position="770"/>
    </location>
</feature>
<feature type="topological domain" description="Cytoplasmic" evidence="7">
    <location>
        <begin position="1"/>
        <end position="29"/>
    </location>
</feature>
<feature type="transmembrane region" description="Helical" evidence="3">
    <location>
        <begin position="30"/>
        <end position="50"/>
    </location>
</feature>
<feature type="topological domain" description="Lumenal" evidence="7">
    <location>
        <begin position="51"/>
        <end position="53"/>
    </location>
</feature>
<feature type="transmembrane region" description="Helical" evidence="3">
    <location>
        <begin position="54"/>
        <end position="74"/>
    </location>
</feature>
<feature type="topological domain" description="Cytoplasmic" evidence="7">
    <location>
        <begin position="75"/>
        <end position="95"/>
    </location>
</feature>
<feature type="transmembrane region" description="Helical" evidence="3">
    <location>
        <begin position="96"/>
        <end position="116"/>
    </location>
</feature>
<feature type="topological domain" description="Lumenal" evidence="7">
    <location>
        <position position="117"/>
    </location>
</feature>
<feature type="transmembrane region" description="Helical" evidence="3">
    <location>
        <begin position="118"/>
        <end position="138"/>
    </location>
</feature>
<feature type="topological domain" description="Cytoplasmic" evidence="7">
    <location>
        <begin position="139"/>
        <end position="149"/>
    </location>
</feature>
<feature type="transmembrane region" description="Helical" evidence="3">
    <location>
        <begin position="150"/>
        <end position="170"/>
    </location>
</feature>
<feature type="topological domain" description="Lumenal" evidence="7">
    <location>
        <begin position="171"/>
        <end position="190"/>
    </location>
</feature>
<feature type="transmembrane region" description="Helical" evidence="3">
    <location>
        <begin position="191"/>
        <end position="211"/>
    </location>
</feature>
<feature type="topological domain" description="Cytoplasmic" evidence="7">
    <location>
        <begin position="212"/>
        <end position="235"/>
    </location>
</feature>
<feature type="transmembrane region" description="Helical" evidence="3">
    <location>
        <begin position="236"/>
        <end position="256"/>
    </location>
</feature>
<feature type="topological domain" description="Lumenal" evidence="7">
    <location>
        <begin position="257"/>
        <end position="264"/>
    </location>
</feature>
<feature type="transmembrane region" description="Helical" evidence="3">
    <location>
        <begin position="265"/>
        <end position="285"/>
    </location>
</feature>
<feature type="topological domain" description="Cytoplasmic" evidence="7">
    <location>
        <begin position="286"/>
        <end position="300"/>
    </location>
</feature>
<feature type="transmembrane region" description="Helical" evidence="3">
    <location>
        <begin position="301"/>
        <end position="321"/>
    </location>
</feature>
<feature type="topological domain" description="Lumenal" evidence="7">
    <location>
        <begin position="322"/>
        <end position="339"/>
    </location>
</feature>
<feature type="transmembrane region" description="Helical" evidence="3">
    <location>
        <begin position="340"/>
        <end position="360"/>
    </location>
</feature>
<feature type="topological domain" description="Cytoplasmic" evidence="7">
    <location>
        <begin position="361"/>
        <end position="415"/>
    </location>
</feature>
<feature type="transmembrane region" description="Helical" evidence="3">
    <location>
        <begin position="416"/>
        <end position="436"/>
    </location>
</feature>
<feature type="topological domain" description="Lumenal" evidence="7">
    <location>
        <begin position="437"/>
        <end position="445"/>
    </location>
</feature>
<feature type="transmembrane region" description="Helical" evidence="3">
    <location>
        <begin position="446"/>
        <end position="466"/>
    </location>
</feature>
<feature type="topological domain" description="Cytoplasmic" evidence="7">
    <location>
        <begin position="467"/>
        <end position="480"/>
    </location>
</feature>
<feature type="transmembrane region" description="Helical" evidence="3">
    <location>
        <begin position="481"/>
        <end position="501"/>
    </location>
</feature>
<feature type="topological domain" description="Lumenal" evidence="7">
    <location>
        <begin position="502"/>
        <end position="517"/>
    </location>
</feature>
<feature type="transmembrane region" description="Helical" evidence="3">
    <location>
        <begin position="518"/>
        <end position="538"/>
    </location>
</feature>
<feature type="topological domain" description="Cytoplasmic" evidence="7">
    <location>
        <begin position="539"/>
        <end position="597"/>
    </location>
</feature>
<feature type="transmembrane region" description="Helical" evidence="3">
    <location>
        <begin position="598"/>
        <end position="618"/>
    </location>
</feature>
<feature type="topological domain" description="Lumenal" evidence="7">
    <location>
        <begin position="619"/>
        <end position="622"/>
    </location>
</feature>
<feature type="transmembrane region" description="Helical" evidence="3">
    <location>
        <begin position="623"/>
        <end position="643"/>
    </location>
</feature>
<feature type="topological domain" description="Cytoplasmic" evidence="7">
    <location>
        <begin position="644"/>
        <end position="770"/>
    </location>
</feature>
<feature type="region of interest" description="His-rich loop; required for zinc transport" evidence="2">
    <location>
        <begin position="539"/>
        <end position="579"/>
    </location>
</feature>
<feature type="region of interest" description="Disordered" evidence="4">
    <location>
        <begin position="548"/>
        <end position="586"/>
    </location>
</feature>
<feature type="compositionally biased region" description="Basic residues" evidence="4">
    <location>
        <begin position="558"/>
        <end position="570"/>
    </location>
</feature>
<feature type="binding site" evidence="1">
    <location>
        <position position="448"/>
    </location>
    <ligand>
        <name>Zn(2+)</name>
        <dbReference type="ChEBI" id="CHEBI:29105"/>
        <note>transported zinc</note>
    </ligand>
</feature>
<feature type="binding site" evidence="1">
    <location>
        <position position="452"/>
    </location>
    <ligand>
        <name>Zn(2+)</name>
        <dbReference type="ChEBI" id="CHEBI:29105"/>
        <note>transported zinc</note>
    </ligand>
</feature>
<feature type="binding site" evidence="1">
    <location>
        <position position="600"/>
    </location>
    <ligand>
        <name>Zn(2+)</name>
        <dbReference type="ChEBI" id="CHEBI:29105"/>
        <note>transported zinc</note>
    </ligand>
</feature>
<feature type="binding site" evidence="1">
    <location>
        <position position="604"/>
    </location>
    <ligand>
        <name>Zn(2+)</name>
        <dbReference type="ChEBI" id="CHEBI:29105"/>
        <note>transported zinc</note>
    </ligand>
</feature>
<feature type="sequence conflict" description="In Ref. 1; AAV98201." evidence="7" ref="1">
    <original>P</original>
    <variation>H</variation>
    <location>
        <position position="659"/>
    </location>
</feature>
<keyword id="KW-0050">Antiport</keyword>
<keyword id="KW-0968">Cytoplasmic vesicle</keyword>
<keyword id="KW-0333">Golgi apparatus</keyword>
<keyword id="KW-0406">Ion transport</keyword>
<keyword id="KW-0472">Membrane</keyword>
<keyword id="KW-0479">Metal-binding</keyword>
<keyword id="KW-1185">Reference proteome</keyword>
<keyword id="KW-0812">Transmembrane</keyword>
<keyword id="KW-1133">Transmembrane helix</keyword>
<keyword id="KW-0813">Transport</keyword>
<keyword id="KW-0862">Zinc</keyword>
<keyword id="KW-0864">Zinc transport</keyword>
<protein>
    <recommendedName>
        <fullName evidence="7">Proton-coupled zinc antiporter SLC30A5</fullName>
    </recommendedName>
    <alternativeName>
        <fullName evidence="2">Solute carrier family 30 member 5</fullName>
    </alternativeName>
    <alternativeName>
        <fullName evidence="8">Zinc transporter 5</fullName>
        <shortName>ZnT-5</shortName>
    </alternativeName>
</protein>
<reference key="1">
    <citation type="journal article" date="2005" name="J. Biol. Chem.">
        <title>Zinc transporters, ZnT5 and ZnT7, are required for the activation of alkaline phosphatases, zinc-requiring enzymes that are glycosylphosphatidylinositol-anchored to the cytoplasmic membrane.</title>
        <authorList>
            <person name="Suzuki T."/>
            <person name="Ishihara K."/>
            <person name="Migaki H."/>
            <person name="Matsuura W."/>
            <person name="Kohda A."/>
            <person name="Okumura K."/>
            <person name="Nagao M."/>
            <person name="Yamaguchi-Iwai Y."/>
            <person name="Kambe T."/>
        </authorList>
    </citation>
    <scope>NUCLEOTIDE SEQUENCE [MRNA]</scope>
    <scope>FUNCTION</scope>
    <scope>SUBCELLULAR LOCATION</scope>
</reference>
<reference key="2">
    <citation type="journal article" date="2005" name="Genome Biol.">
        <title>Full-length cDNAs from chicken bursal lymphocytes to facilitate gene function analysis.</title>
        <authorList>
            <person name="Caldwell R.B."/>
            <person name="Kierzek A.M."/>
            <person name="Arakawa H."/>
            <person name="Bezzubov Y."/>
            <person name="Zaim J."/>
            <person name="Fiedler P."/>
            <person name="Kutter S."/>
            <person name="Blagodatski A."/>
            <person name="Kostovska D."/>
            <person name="Koter M."/>
            <person name="Plachy J."/>
            <person name="Carninci P."/>
            <person name="Hayashizaki Y."/>
            <person name="Buerstedde J.-M."/>
        </authorList>
    </citation>
    <scope>NUCLEOTIDE SEQUENCE [LARGE SCALE MRNA]</scope>
    <source>
        <strain>CB</strain>
        <tissue>Bursa of Fabricius</tissue>
    </source>
</reference>
<name>ZNT5_CHICK</name>